<sequence length="190" mass="21067">MLGMIRNSLFGSVETWPWQVLSTGGKEDVSYEERACEGGKFATVEVTDKPVDEALREAMPKIMKYVGGTNDKGVGMGMTVPVSFALFPNEDGSLQKKLKVWFRIPNQFQGSPPAPSDESVKIEEREGITVYSTQFGGYAKEADYVAHATQLRTTLEGTPATYQGDVYYCAGYDPPMKPYGRRNEVWLVKA</sequence>
<proteinExistence type="evidence at protein level"/>
<reference key="1">
    <citation type="journal article" date="1998" name="J. Biol. Chem.">
        <title>Molecular characterization of a newly identified heme-binding protein induced during differentiation of Murine erythroleukemia cells.</title>
        <authorList>
            <person name="Taketani S."/>
            <person name="Adachi Y."/>
            <person name="Kohno H."/>
            <person name="Ikehara S."/>
            <person name="Tokunaga R."/>
            <person name="Ishii T."/>
        </authorList>
    </citation>
    <scope>NUCLEOTIDE SEQUENCE [MRNA]</scope>
    <scope>SUBCELLULAR LOCATION</scope>
    <scope>TISSUE SPECIFICITY</scope>
</reference>
<reference key="2">
    <citation type="journal article" date="1999" name="Brain Res. Mol. Brain Res.">
        <title>Discovery of a putative heme-binding protein family (SOUL/HBP) by two-tissue suppression subtractive hybridization and database searches.</title>
        <authorList>
            <person name="Zylka M.J."/>
            <person name="Reppert S.M."/>
        </authorList>
    </citation>
    <scope>NUCLEOTIDE SEQUENCE [MRNA]</scope>
</reference>
<reference key="3">
    <citation type="journal article" date="2002" name="Arch. Biochem. Biophys.">
        <title>Characterization of a human and mouse tetrapyrrole-binding protein.</title>
        <authorList>
            <person name="Jacob Blackmon B."/>
            <person name="Dailey T.A."/>
            <person name="Lianchun X."/>
            <person name="Dailey H.A."/>
        </authorList>
    </citation>
    <scope>NUCLEOTIDE SEQUENCE [MRNA]</scope>
    <scope>FUNCTION</scope>
    <scope>SUBCELLULAR LOCATION</scope>
    <scope>SUBUNIT</scope>
    <source>
        <tissue>Liver</tissue>
    </source>
</reference>
<reference key="4">
    <citation type="submission" date="2005-07" db="EMBL/GenBank/DDBJ databases">
        <title>Cloning of mouse full open reading frames in Gateway(R) system entry vector (pDONR201).</title>
        <authorList>
            <person name="Ebert L."/>
            <person name="Muenstermann E."/>
            <person name="Schatten R."/>
            <person name="Henze S."/>
            <person name="Bohn E."/>
            <person name="Mollenhauer J."/>
            <person name="Wiemann S."/>
            <person name="Schick M."/>
            <person name="Korn B."/>
        </authorList>
    </citation>
    <scope>NUCLEOTIDE SEQUENCE [LARGE SCALE MRNA]</scope>
</reference>
<reference key="5">
    <citation type="journal article" date="2009" name="PLoS Biol.">
        <title>Lineage-specific biology revealed by a finished genome assembly of the mouse.</title>
        <authorList>
            <person name="Church D.M."/>
            <person name="Goodstadt L."/>
            <person name="Hillier L.W."/>
            <person name="Zody M.C."/>
            <person name="Goldstein S."/>
            <person name="She X."/>
            <person name="Bult C.J."/>
            <person name="Agarwala R."/>
            <person name="Cherry J.L."/>
            <person name="DiCuccio M."/>
            <person name="Hlavina W."/>
            <person name="Kapustin Y."/>
            <person name="Meric P."/>
            <person name="Maglott D."/>
            <person name="Birtle Z."/>
            <person name="Marques A.C."/>
            <person name="Graves T."/>
            <person name="Zhou S."/>
            <person name="Teague B."/>
            <person name="Potamousis K."/>
            <person name="Churas C."/>
            <person name="Place M."/>
            <person name="Herschleb J."/>
            <person name="Runnheim R."/>
            <person name="Forrest D."/>
            <person name="Amos-Landgraf J."/>
            <person name="Schwartz D.C."/>
            <person name="Cheng Z."/>
            <person name="Lindblad-Toh K."/>
            <person name="Eichler E.E."/>
            <person name="Ponting C.P."/>
        </authorList>
    </citation>
    <scope>NUCLEOTIDE SEQUENCE [LARGE SCALE GENOMIC DNA]</scope>
    <source>
        <strain>C57BL/6J</strain>
    </source>
</reference>
<reference key="6">
    <citation type="journal article" date="2004" name="Genome Res.">
        <title>The status, quality, and expansion of the NIH full-length cDNA project: the Mammalian Gene Collection (MGC).</title>
        <authorList>
            <consortium name="The MGC Project Team"/>
        </authorList>
    </citation>
    <scope>NUCLEOTIDE SEQUENCE [LARGE SCALE MRNA]</scope>
    <source>
        <strain>FVB/N</strain>
        <tissue>Colon</tissue>
    </source>
</reference>
<reference key="7">
    <citation type="journal article" date="2010" name="Cell">
        <title>A tissue-specific atlas of mouse protein phosphorylation and expression.</title>
        <authorList>
            <person name="Huttlin E.L."/>
            <person name="Jedrychowski M.P."/>
            <person name="Elias J.E."/>
            <person name="Goswami T."/>
            <person name="Rad R."/>
            <person name="Beausoleil S.A."/>
            <person name="Villen J."/>
            <person name="Haas W."/>
            <person name="Sowa M.E."/>
            <person name="Gygi S.P."/>
        </authorList>
    </citation>
    <scope>IDENTIFICATION BY MASS SPECTROMETRY [LARGE SCALE ANALYSIS]</scope>
    <source>
        <tissue>Brain</tissue>
        <tissue>Brown adipose tissue</tissue>
        <tissue>Heart</tissue>
        <tissue>Kidney</tissue>
        <tissue>Liver</tissue>
        <tissue>Lung</tissue>
        <tissue>Pancreas</tissue>
        <tissue>Spleen</tissue>
        <tissue>Testis</tissue>
    </source>
</reference>
<reference key="8">
    <citation type="journal article" date="2006" name="J. Biol. Chem.">
        <title>The first structure from the SOUL/HBP family of heme-binding proteins, murine P22HBP.</title>
        <authorList>
            <person name="Dias J.S."/>
            <person name="Macedo A.L."/>
            <person name="Ferreira G.C."/>
            <person name="Peterson F.C."/>
            <person name="Volkman B.F."/>
            <person name="Goodfellow B.J."/>
        </authorList>
    </citation>
    <scope>STRUCTURE BY NMR OF 7-190</scope>
    <scope>FUNCTION AS HEME-BINDING PROTEIN</scope>
    <scope>SUBUNIT</scope>
    <scope>DOMAIN</scope>
</reference>
<reference key="9">
    <citation type="journal article" date="2006" name="J. Mol. Biol.">
        <title>A novel haem-binding interface in the 22 kDa haem-binding protein p22HBP.</title>
        <authorList>
            <person name="Gell D.A."/>
            <person name="Westman B.J."/>
            <person name="Gorman D."/>
            <person name="Liew C."/>
            <person name="Welch J.J."/>
            <person name="Weiss M.J."/>
            <person name="Mackay J.P."/>
        </authorList>
    </citation>
    <scope>STRUCTURE BY NMR</scope>
    <scope>SUBUNIT</scope>
    <scope>DOMAIN</scope>
</reference>
<comment type="function">
    <text evidence="1 3">May bind free porphyrinogens that may be present in the cell and thus facilitate removal of these potentially toxic compound. Binds with a high affinity to one molecule of heme or porphyrins. It binds metalloporphyrins, free porphyrins and N-methylprotoporphyrin with similar affinities.</text>
</comment>
<comment type="subunit">
    <text evidence="1 2 3">Monomer.</text>
</comment>
<comment type="subcellular location">
    <subcellularLocation>
        <location evidence="1 4">Cytoplasm</location>
    </subcellularLocation>
</comment>
<comment type="tissue specificity">
    <text evidence="4">Ubiquitously expressed. Extremely abundant in liver.</text>
</comment>
<comment type="domain">
    <text evidence="2 3">Forms a distorted beta-barrel structure, with two helices that are packed against the outer surface of the barrel. Porphyrins are expected to bind to a hydrophobic patch on the outer surface of the beta-barrel structure.</text>
</comment>
<comment type="similarity">
    <text evidence="5">Belongs to the HEBP family.</text>
</comment>
<keyword id="KW-0002">3D-structure</keyword>
<keyword id="KW-0963">Cytoplasm</keyword>
<keyword id="KW-1185">Reference proteome</keyword>
<name>HEBP1_MOUSE</name>
<feature type="chain" id="PRO_0000116898" description="Heme-binding protein 1">
    <location>
        <begin position="1"/>
        <end position="190"/>
    </location>
</feature>
<feature type="sequence conflict" description="In Ref. 1; BAA33770, 2; AAD32096, 4; CAJ18470 and 6; AAH12654." evidence="5" ref="1 2 4 6">
    <original>L</original>
    <variation>V</variation>
    <location>
        <position position="86"/>
    </location>
</feature>
<feature type="strand" evidence="7">
    <location>
        <begin position="10"/>
        <end position="12"/>
    </location>
</feature>
<feature type="strand" evidence="8">
    <location>
        <begin position="13"/>
        <end position="15"/>
    </location>
</feature>
<feature type="strand" evidence="8">
    <location>
        <begin position="18"/>
        <end position="24"/>
    </location>
</feature>
<feature type="strand" evidence="8">
    <location>
        <begin position="27"/>
        <end position="29"/>
    </location>
</feature>
<feature type="strand" evidence="8">
    <location>
        <begin position="31"/>
        <end position="36"/>
    </location>
</feature>
<feature type="strand" evidence="8">
    <location>
        <begin position="39"/>
        <end position="49"/>
    </location>
</feature>
<feature type="helix" evidence="8">
    <location>
        <begin position="51"/>
        <end position="66"/>
    </location>
</feature>
<feature type="strand" evidence="7">
    <location>
        <begin position="70"/>
        <end position="72"/>
    </location>
</feature>
<feature type="strand" evidence="8">
    <location>
        <begin position="78"/>
        <end position="88"/>
    </location>
</feature>
<feature type="strand" evidence="8">
    <location>
        <begin position="94"/>
        <end position="103"/>
    </location>
</feature>
<feature type="helix" evidence="8">
    <location>
        <begin position="106"/>
        <end position="108"/>
    </location>
</feature>
<feature type="strand" evidence="8">
    <location>
        <begin position="109"/>
        <end position="111"/>
    </location>
</feature>
<feature type="strand" evidence="8">
    <location>
        <begin position="115"/>
        <end position="117"/>
    </location>
</feature>
<feature type="strand" evidence="8">
    <location>
        <begin position="120"/>
        <end position="125"/>
    </location>
</feature>
<feature type="strand" evidence="8">
    <location>
        <begin position="128"/>
        <end position="135"/>
    </location>
</feature>
<feature type="helix" evidence="8">
    <location>
        <begin position="141"/>
        <end position="155"/>
    </location>
</feature>
<feature type="strand" evidence="8">
    <location>
        <begin position="167"/>
        <end position="171"/>
    </location>
</feature>
<feature type="strand" evidence="6">
    <location>
        <begin position="176"/>
        <end position="179"/>
    </location>
</feature>
<feature type="strand" evidence="8">
    <location>
        <begin position="183"/>
        <end position="189"/>
    </location>
</feature>
<accession>Q9R257</accession>
<accession>O88814</accession>
<organism>
    <name type="scientific">Mus musculus</name>
    <name type="common">Mouse</name>
    <dbReference type="NCBI Taxonomy" id="10090"/>
    <lineage>
        <taxon>Eukaryota</taxon>
        <taxon>Metazoa</taxon>
        <taxon>Chordata</taxon>
        <taxon>Craniata</taxon>
        <taxon>Vertebrata</taxon>
        <taxon>Euteleostomi</taxon>
        <taxon>Mammalia</taxon>
        <taxon>Eutheria</taxon>
        <taxon>Euarchontoglires</taxon>
        <taxon>Glires</taxon>
        <taxon>Rodentia</taxon>
        <taxon>Myomorpha</taxon>
        <taxon>Muroidea</taxon>
        <taxon>Muridae</taxon>
        <taxon>Murinae</taxon>
        <taxon>Mus</taxon>
        <taxon>Mus</taxon>
    </lineage>
</organism>
<evidence type="ECO:0000269" key="1">
    <source>
    </source>
</evidence>
<evidence type="ECO:0000269" key="2">
    <source>
    </source>
</evidence>
<evidence type="ECO:0000269" key="3">
    <source>
    </source>
</evidence>
<evidence type="ECO:0000269" key="4">
    <source>
    </source>
</evidence>
<evidence type="ECO:0000305" key="5"/>
<evidence type="ECO:0007829" key="6">
    <source>
        <dbReference type="PDB" id="2GOV"/>
    </source>
</evidence>
<evidence type="ECO:0007829" key="7">
    <source>
        <dbReference type="PDB" id="2HVA"/>
    </source>
</evidence>
<evidence type="ECO:0007829" key="8">
    <source>
        <dbReference type="PDB" id="7OON"/>
    </source>
</evidence>
<dbReference type="EMBL" id="AB013095">
    <property type="protein sequence ID" value="BAA33770.1"/>
    <property type="molecule type" value="mRNA"/>
</dbReference>
<dbReference type="EMBL" id="AF117613">
    <property type="protein sequence ID" value="AAD32096.1"/>
    <property type="molecule type" value="mRNA"/>
</dbReference>
<dbReference type="EMBL" id="CT010262">
    <property type="protein sequence ID" value="CAJ18470.1"/>
    <property type="molecule type" value="mRNA"/>
</dbReference>
<dbReference type="EMBL" id="AC131718">
    <property type="status" value="NOT_ANNOTATED_CDS"/>
    <property type="molecule type" value="Genomic_DNA"/>
</dbReference>
<dbReference type="EMBL" id="BC012654">
    <property type="protein sequence ID" value="AAH12654.1"/>
    <property type="molecule type" value="mRNA"/>
</dbReference>
<dbReference type="CCDS" id="CCDS20645.1"/>
<dbReference type="RefSeq" id="NP_038574.3">
    <property type="nucleotide sequence ID" value="NM_013546.3"/>
</dbReference>
<dbReference type="PDB" id="2GOV">
    <property type="method" value="NMR"/>
    <property type="chains" value="A=7-190"/>
</dbReference>
<dbReference type="PDB" id="2HVA">
    <property type="method" value="NMR"/>
    <property type="chains" value="A=1-190"/>
</dbReference>
<dbReference type="PDB" id="4A1M">
    <property type="method" value="NMR"/>
    <property type="chains" value="A=7-190"/>
</dbReference>
<dbReference type="PDB" id="7OON">
    <property type="method" value="X-ray"/>
    <property type="resolution" value="2.80 A"/>
    <property type="chains" value="A/B=7-190"/>
</dbReference>
<dbReference type="PDBsum" id="2GOV"/>
<dbReference type="PDBsum" id="2HVA"/>
<dbReference type="PDBsum" id="4A1M"/>
<dbReference type="PDBsum" id="7OON"/>
<dbReference type="BMRB" id="Q9R257"/>
<dbReference type="SMR" id="Q9R257"/>
<dbReference type="BioGRID" id="200269">
    <property type="interactions" value="3"/>
</dbReference>
<dbReference type="FunCoup" id="Q9R257">
    <property type="interactions" value="933"/>
</dbReference>
<dbReference type="IntAct" id="Q9R257">
    <property type="interactions" value="2"/>
</dbReference>
<dbReference type="STRING" id="10090.ENSMUSP00000042232"/>
<dbReference type="GlyGen" id="Q9R257">
    <property type="glycosylation" value="2 sites, 1 O-linked glycan (2 sites)"/>
</dbReference>
<dbReference type="iPTMnet" id="Q9R257"/>
<dbReference type="PhosphoSitePlus" id="Q9R257"/>
<dbReference type="SwissPalm" id="Q9R257"/>
<dbReference type="CPTAC" id="non-CPTAC-3818"/>
<dbReference type="jPOST" id="Q9R257"/>
<dbReference type="PaxDb" id="10090-ENSMUSP00000042232"/>
<dbReference type="PeptideAtlas" id="Q9R257"/>
<dbReference type="ProteomicsDB" id="269554"/>
<dbReference type="Pumba" id="Q9R257"/>
<dbReference type="DNASU" id="15199"/>
<dbReference type="GeneID" id="15199"/>
<dbReference type="KEGG" id="mmu:15199"/>
<dbReference type="UCSC" id="uc009elh.1">
    <property type="organism name" value="mouse"/>
</dbReference>
<dbReference type="AGR" id="MGI:1333880"/>
<dbReference type="CTD" id="50865"/>
<dbReference type="MGI" id="MGI:1333880">
    <property type="gene designation" value="Hebp1"/>
</dbReference>
<dbReference type="eggNOG" id="ENOG502RYZW">
    <property type="taxonomic scope" value="Eukaryota"/>
</dbReference>
<dbReference type="InParanoid" id="Q9R257"/>
<dbReference type="OrthoDB" id="9980274at2759"/>
<dbReference type="TreeFam" id="TF328887"/>
<dbReference type="Reactome" id="R-MMU-418594">
    <property type="pathway name" value="G alpha (i) signalling events"/>
</dbReference>
<dbReference type="Reactome" id="R-MMU-444473">
    <property type="pathway name" value="Formyl peptide receptors bind formyl peptides and many other ligands"/>
</dbReference>
<dbReference type="BioGRID-ORCS" id="15199">
    <property type="hits" value="1 hit in 76 CRISPR screens"/>
</dbReference>
<dbReference type="ChiTaRS" id="Hebp1">
    <property type="organism name" value="mouse"/>
</dbReference>
<dbReference type="EvolutionaryTrace" id="Q9R257"/>
<dbReference type="PRO" id="PR:Q9R257"/>
<dbReference type="Proteomes" id="UP000000589">
    <property type="component" value="Unplaced"/>
</dbReference>
<dbReference type="RNAct" id="Q9R257">
    <property type="molecule type" value="protein"/>
</dbReference>
<dbReference type="GO" id="GO:0005737">
    <property type="term" value="C:cytoplasm"/>
    <property type="evidence" value="ECO:0000314"/>
    <property type="project" value="MGI"/>
</dbReference>
<dbReference type="GO" id="GO:0005829">
    <property type="term" value="C:cytosol"/>
    <property type="evidence" value="ECO:0000314"/>
    <property type="project" value="MGI"/>
</dbReference>
<dbReference type="GO" id="GO:0005739">
    <property type="term" value="C:mitochondrion"/>
    <property type="evidence" value="ECO:0007005"/>
    <property type="project" value="MGI"/>
</dbReference>
<dbReference type="GO" id="GO:0020037">
    <property type="term" value="F:heme binding"/>
    <property type="evidence" value="ECO:0000314"/>
    <property type="project" value="UniProtKB"/>
</dbReference>
<dbReference type="GO" id="GO:0042168">
    <property type="term" value="P:heme metabolic process"/>
    <property type="evidence" value="ECO:0000305"/>
    <property type="project" value="MGI"/>
</dbReference>
<dbReference type="FunFam" id="3.20.80.10:FF:000003">
    <property type="entry name" value="Heme-binding protein 1"/>
    <property type="match status" value="1"/>
</dbReference>
<dbReference type="Gene3D" id="3.20.80.10">
    <property type="entry name" value="Regulatory factor, effector binding domain"/>
    <property type="match status" value="1"/>
</dbReference>
<dbReference type="InterPro" id="IPR011256">
    <property type="entry name" value="Reg_factor_effector_dom_sf"/>
</dbReference>
<dbReference type="InterPro" id="IPR006917">
    <property type="entry name" value="SOUL_haem-bd"/>
</dbReference>
<dbReference type="PANTHER" id="PTHR11220:SF22">
    <property type="entry name" value="HEME-BINDING PROTEIN 1"/>
    <property type="match status" value="1"/>
</dbReference>
<dbReference type="PANTHER" id="PTHR11220">
    <property type="entry name" value="HEME-BINDING PROTEIN-RELATED"/>
    <property type="match status" value="1"/>
</dbReference>
<dbReference type="Pfam" id="PF04832">
    <property type="entry name" value="SOUL"/>
    <property type="match status" value="1"/>
</dbReference>
<dbReference type="SUPFAM" id="SSF55136">
    <property type="entry name" value="Probable bacterial effector-binding domain"/>
    <property type="match status" value="1"/>
</dbReference>
<protein>
    <recommendedName>
        <fullName>Heme-binding protein 1</fullName>
    </recommendedName>
    <alternativeName>
        <fullName>p22HBP</fullName>
    </alternativeName>
</protein>
<gene>
    <name type="primary">Hebp1</name>
    <name type="synonym">Hbp</name>
</gene>